<dbReference type="EC" id="6.3.5.2" evidence="1"/>
<dbReference type="EMBL" id="CP001277">
    <property type="protein sequence ID" value="ACQ68514.1"/>
    <property type="molecule type" value="Genomic_DNA"/>
</dbReference>
<dbReference type="RefSeq" id="WP_015874276.1">
    <property type="nucleotide sequence ID" value="NC_012751.1"/>
</dbReference>
<dbReference type="SMR" id="C4K7H1"/>
<dbReference type="STRING" id="572265.HDEF_1926"/>
<dbReference type="GeneID" id="66261501"/>
<dbReference type="KEGG" id="hde:HDEF_1926"/>
<dbReference type="eggNOG" id="COG0518">
    <property type="taxonomic scope" value="Bacteria"/>
</dbReference>
<dbReference type="eggNOG" id="COG0519">
    <property type="taxonomic scope" value="Bacteria"/>
</dbReference>
<dbReference type="HOGENOM" id="CLU_014340_0_5_6"/>
<dbReference type="UniPathway" id="UPA00189">
    <property type="reaction ID" value="UER00296"/>
</dbReference>
<dbReference type="Proteomes" id="UP000002334">
    <property type="component" value="Chromosome"/>
</dbReference>
<dbReference type="GO" id="GO:0005829">
    <property type="term" value="C:cytosol"/>
    <property type="evidence" value="ECO:0007669"/>
    <property type="project" value="TreeGrafter"/>
</dbReference>
<dbReference type="GO" id="GO:0005524">
    <property type="term" value="F:ATP binding"/>
    <property type="evidence" value="ECO:0007669"/>
    <property type="project" value="UniProtKB-UniRule"/>
</dbReference>
<dbReference type="GO" id="GO:0003921">
    <property type="term" value="F:GMP synthase activity"/>
    <property type="evidence" value="ECO:0007669"/>
    <property type="project" value="InterPro"/>
</dbReference>
<dbReference type="CDD" id="cd01742">
    <property type="entry name" value="GATase1_GMP_Synthase"/>
    <property type="match status" value="1"/>
</dbReference>
<dbReference type="CDD" id="cd01997">
    <property type="entry name" value="GMP_synthase_C"/>
    <property type="match status" value="1"/>
</dbReference>
<dbReference type="FunFam" id="3.30.300.10:FF:000002">
    <property type="entry name" value="GMP synthase [glutamine-hydrolyzing]"/>
    <property type="match status" value="1"/>
</dbReference>
<dbReference type="FunFam" id="3.40.50.620:FF:000001">
    <property type="entry name" value="GMP synthase [glutamine-hydrolyzing]"/>
    <property type="match status" value="1"/>
</dbReference>
<dbReference type="FunFam" id="3.40.50.880:FF:000001">
    <property type="entry name" value="GMP synthase [glutamine-hydrolyzing]"/>
    <property type="match status" value="1"/>
</dbReference>
<dbReference type="Gene3D" id="3.30.300.10">
    <property type="match status" value="1"/>
</dbReference>
<dbReference type="Gene3D" id="3.40.50.880">
    <property type="match status" value="1"/>
</dbReference>
<dbReference type="Gene3D" id="3.40.50.620">
    <property type="entry name" value="HUPs"/>
    <property type="match status" value="1"/>
</dbReference>
<dbReference type="HAMAP" id="MF_00344">
    <property type="entry name" value="GMP_synthase"/>
    <property type="match status" value="1"/>
</dbReference>
<dbReference type="InterPro" id="IPR029062">
    <property type="entry name" value="Class_I_gatase-like"/>
</dbReference>
<dbReference type="InterPro" id="IPR017926">
    <property type="entry name" value="GATASE"/>
</dbReference>
<dbReference type="InterPro" id="IPR001674">
    <property type="entry name" value="GMP_synth_C"/>
</dbReference>
<dbReference type="InterPro" id="IPR004739">
    <property type="entry name" value="GMP_synth_GATase"/>
</dbReference>
<dbReference type="InterPro" id="IPR022955">
    <property type="entry name" value="GMP_synthase"/>
</dbReference>
<dbReference type="InterPro" id="IPR025777">
    <property type="entry name" value="GMPS_ATP_PPase_dom"/>
</dbReference>
<dbReference type="InterPro" id="IPR022310">
    <property type="entry name" value="NAD/GMP_synthase"/>
</dbReference>
<dbReference type="InterPro" id="IPR014729">
    <property type="entry name" value="Rossmann-like_a/b/a_fold"/>
</dbReference>
<dbReference type="NCBIfam" id="TIGR00884">
    <property type="entry name" value="guaA_Cterm"/>
    <property type="match status" value="1"/>
</dbReference>
<dbReference type="NCBIfam" id="TIGR00888">
    <property type="entry name" value="guaA_Nterm"/>
    <property type="match status" value="1"/>
</dbReference>
<dbReference type="NCBIfam" id="NF000848">
    <property type="entry name" value="PRK00074.1"/>
    <property type="match status" value="1"/>
</dbReference>
<dbReference type="PANTHER" id="PTHR11922:SF2">
    <property type="entry name" value="GMP SYNTHASE [GLUTAMINE-HYDROLYZING]"/>
    <property type="match status" value="1"/>
</dbReference>
<dbReference type="PANTHER" id="PTHR11922">
    <property type="entry name" value="GMP SYNTHASE-RELATED"/>
    <property type="match status" value="1"/>
</dbReference>
<dbReference type="Pfam" id="PF00117">
    <property type="entry name" value="GATase"/>
    <property type="match status" value="1"/>
</dbReference>
<dbReference type="Pfam" id="PF00958">
    <property type="entry name" value="GMP_synt_C"/>
    <property type="match status" value="1"/>
</dbReference>
<dbReference type="Pfam" id="PF02540">
    <property type="entry name" value="NAD_synthase"/>
    <property type="match status" value="1"/>
</dbReference>
<dbReference type="PRINTS" id="PR00097">
    <property type="entry name" value="ANTSNTHASEII"/>
</dbReference>
<dbReference type="PRINTS" id="PR00099">
    <property type="entry name" value="CPSGATASE"/>
</dbReference>
<dbReference type="PRINTS" id="PR00096">
    <property type="entry name" value="GATASE"/>
</dbReference>
<dbReference type="SUPFAM" id="SSF52402">
    <property type="entry name" value="Adenine nucleotide alpha hydrolases-like"/>
    <property type="match status" value="1"/>
</dbReference>
<dbReference type="SUPFAM" id="SSF52317">
    <property type="entry name" value="Class I glutamine amidotransferase-like"/>
    <property type="match status" value="1"/>
</dbReference>
<dbReference type="SUPFAM" id="SSF54810">
    <property type="entry name" value="GMP synthetase C-terminal dimerisation domain"/>
    <property type="match status" value="1"/>
</dbReference>
<dbReference type="PROSITE" id="PS51273">
    <property type="entry name" value="GATASE_TYPE_1"/>
    <property type="match status" value="1"/>
</dbReference>
<dbReference type="PROSITE" id="PS51553">
    <property type="entry name" value="GMPS_ATP_PPASE"/>
    <property type="match status" value="1"/>
</dbReference>
<keyword id="KW-0067">ATP-binding</keyword>
<keyword id="KW-0315">Glutamine amidotransferase</keyword>
<keyword id="KW-0332">GMP biosynthesis</keyword>
<keyword id="KW-0436">Ligase</keyword>
<keyword id="KW-0547">Nucleotide-binding</keyword>
<keyword id="KW-0658">Purine biosynthesis</keyword>
<organism>
    <name type="scientific">Hamiltonella defensa subsp. Acyrthosiphon pisum (strain 5AT)</name>
    <dbReference type="NCBI Taxonomy" id="572265"/>
    <lineage>
        <taxon>Bacteria</taxon>
        <taxon>Pseudomonadati</taxon>
        <taxon>Pseudomonadota</taxon>
        <taxon>Gammaproteobacteria</taxon>
        <taxon>Enterobacterales</taxon>
        <taxon>Enterobacteriaceae</taxon>
        <taxon>aphid secondary symbionts</taxon>
        <taxon>Candidatus Hamiltonella</taxon>
    </lineage>
</organism>
<accession>C4K7H1</accession>
<comment type="function">
    <text evidence="1">Catalyzes the synthesis of GMP from XMP.</text>
</comment>
<comment type="catalytic activity">
    <reaction evidence="1">
        <text>XMP + L-glutamine + ATP + H2O = GMP + L-glutamate + AMP + diphosphate + 2 H(+)</text>
        <dbReference type="Rhea" id="RHEA:11680"/>
        <dbReference type="ChEBI" id="CHEBI:15377"/>
        <dbReference type="ChEBI" id="CHEBI:15378"/>
        <dbReference type="ChEBI" id="CHEBI:29985"/>
        <dbReference type="ChEBI" id="CHEBI:30616"/>
        <dbReference type="ChEBI" id="CHEBI:33019"/>
        <dbReference type="ChEBI" id="CHEBI:57464"/>
        <dbReference type="ChEBI" id="CHEBI:58115"/>
        <dbReference type="ChEBI" id="CHEBI:58359"/>
        <dbReference type="ChEBI" id="CHEBI:456215"/>
        <dbReference type="EC" id="6.3.5.2"/>
    </reaction>
</comment>
<comment type="pathway">
    <text evidence="1">Purine metabolism; GMP biosynthesis; GMP from XMP (L-Gln route): step 1/1.</text>
</comment>
<comment type="subunit">
    <text evidence="1">Homodimer.</text>
</comment>
<sequence length="525" mass="58561">MIKNIDRHRILILDFGSQYTQLLARRIREMGVYSELWPWDVAAERIQAFHPQGIILSGGPESATENDTPRAPDIIFTLGVPVLGICYGMQTMAIQLGGTVSNTHQGEFGYAPLALKNKNALIDGLEDFVNANNEPCLKVWMSHADKVTKLPEHFTCIASTETCPIAIMAHPEKHFYGVQFHPEVTHTLQGQSLLKRFVLQICQCEPLWTPRNIIDQTLSELKDQIGDDQVILGLSGGVDSAVTAILLHRAIGKSLTCVFVDNGLLRLNESQQVLNIFQDQFGLNIIHVSAANRFMNALKGIQDPEKKRKVIGRVFVDIFDEQAAKQKGVKWLAQGTIYTDLVESAASGTAKSHLIKSHHNVAGLPKEMKLGLIEPLKELFKDEVRQLGLELGLPNAMLHRHPFPGPGLGVRVLGEVKQEYCDLLRQADAIFIQELQKAELYQKVSQAFAVFLPIRSVGVMGDGRKYEWVIALRAIETVDFMTAHWAELPYDLLGRVSNRIINEVKGISRVVYDISGKPPATIEWE</sequence>
<protein>
    <recommendedName>
        <fullName evidence="1">GMP synthase [glutamine-hydrolyzing]</fullName>
        <ecNumber evidence="1">6.3.5.2</ecNumber>
    </recommendedName>
    <alternativeName>
        <fullName evidence="1">GMP synthetase</fullName>
    </alternativeName>
    <alternativeName>
        <fullName evidence="1">Glutamine amidotransferase</fullName>
    </alternativeName>
</protein>
<proteinExistence type="inferred from homology"/>
<reference key="1">
    <citation type="journal article" date="2009" name="Proc. Natl. Acad. Sci. U.S.A.">
        <title>Hamiltonella defensa, genome evolution of protective bacterial endosymbiont from pathogenic ancestors.</title>
        <authorList>
            <person name="Degnan P.H."/>
            <person name="Yu Y."/>
            <person name="Sisneros N."/>
            <person name="Wing R.A."/>
            <person name="Moran N.A."/>
        </authorList>
    </citation>
    <scope>NUCLEOTIDE SEQUENCE [LARGE SCALE GENOMIC DNA]</scope>
    <source>
        <strain>5AT</strain>
    </source>
</reference>
<feature type="chain" id="PRO_1000205305" description="GMP synthase [glutamine-hydrolyzing]">
    <location>
        <begin position="1"/>
        <end position="525"/>
    </location>
</feature>
<feature type="domain" description="Glutamine amidotransferase type-1" evidence="1">
    <location>
        <begin position="9"/>
        <end position="207"/>
    </location>
</feature>
<feature type="domain" description="GMPS ATP-PPase" evidence="1">
    <location>
        <begin position="208"/>
        <end position="400"/>
    </location>
</feature>
<feature type="active site" description="Nucleophile" evidence="1">
    <location>
        <position position="86"/>
    </location>
</feature>
<feature type="active site" evidence="1">
    <location>
        <position position="181"/>
    </location>
</feature>
<feature type="active site" evidence="1">
    <location>
        <position position="183"/>
    </location>
</feature>
<feature type="binding site" evidence="1">
    <location>
        <begin position="235"/>
        <end position="241"/>
    </location>
    <ligand>
        <name>ATP</name>
        <dbReference type="ChEBI" id="CHEBI:30616"/>
    </ligand>
</feature>
<name>GUAA_HAMD5</name>
<evidence type="ECO:0000255" key="1">
    <source>
        <dbReference type="HAMAP-Rule" id="MF_00344"/>
    </source>
</evidence>
<gene>
    <name evidence="1" type="primary">guaA</name>
    <name type="ordered locus">HDEF_1926</name>
</gene>